<feature type="chain" id="PRO_0000424577" description="Protein SHI RELATED SEQUENCE 5">
    <location>
        <begin position="1"/>
        <end position="346"/>
    </location>
</feature>
<feature type="DNA-binding region" description="Zn(2)-C6 fungal-type; degenerate" evidence="1">
    <location>
        <begin position="125"/>
        <end position="152"/>
    </location>
</feature>
<feature type="region of interest" description="Disordered" evidence="2">
    <location>
        <begin position="7"/>
        <end position="31"/>
    </location>
</feature>
<feature type="region of interest" description="Disordered" evidence="2">
    <location>
        <begin position="175"/>
        <end position="215"/>
    </location>
</feature>
<feature type="short sequence motif" description="Required for homo- and heterodimerization" evidence="1">
    <location>
        <begin position="269"/>
        <end position="272"/>
    </location>
</feature>
<feature type="compositionally biased region" description="Basic and acidic residues" evidence="2">
    <location>
        <begin position="18"/>
        <end position="31"/>
    </location>
</feature>
<feature type="compositionally biased region" description="Polar residues" evidence="2">
    <location>
        <begin position="175"/>
        <end position="186"/>
    </location>
</feature>
<feature type="compositionally biased region" description="Basic and acidic residues" evidence="2">
    <location>
        <begin position="187"/>
        <end position="207"/>
    </location>
</feature>
<feature type="binding site" evidence="1">
    <location>
        <position position="125"/>
    </location>
    <ligand>
        <name>Zn(2+)</name>
        <dbReference type="ChEBI" id="CHEBI:29105"/>
        <label>1</label>
    </ligand>
</feature>
<feature type="binding site" evidence="1">
    <location>
        <position position="125"/>
    </location>
    <ligand>
        <name>Zn(2+)</name>
        <dbReference type="ChEBI" id="CHEBI:29105"/>
        <label>2</label>
    </ligand>
</feature>
<feature type="binding site" evidence="1">
    <location>
        <position position="128"/>
    </location>
    <ligand>
        <name>Zn(2+)</name>
        <dbReference type="ChEBI" id="CHEBI:29105"/>
        <label>1</label>
    </ligand>
</feature>
<feature type="binding site" evidence="1">
    <location>
        <position position="136"/>
    </location>
    <ligand>
        <name>Zn(2+)</name>
        <dbReference type="ChEBI" id="CHEBI:29105"/>
        <label>1</label>
    </ligand>
</feature>
<feature type="binding site" evidence="1">
    <location>
        <position position="141"/>
    </location>
    <ligand>
        <name>Zn(2+)</name>
        <dbReference type="ChEBI" id="CHEBI:29105"/>
        <label>1</label>
    </ligand>
</feature>
<feature type="binding site" evidence="1">
    <location>
        <position position="141"/>
    </location>
    <ligand>
        <name>Zn(2+)</name>
        <dbReference type="ChEBI" id="CHEBI:29105"/>
        <label>2</label>
    </ligand>
</feature>
<feature type="binding site" evidence="1">
    <location>
        <position position="145"/>
    </location>
    <ligand>
        <name>Zn(2+)</name>
        <dbReference type="ChEBI" id="CHEBI:29105"/>
        <label>2</label>
    </ligand>
</feature>
<feature type="binding site" evidence="1">
    <location>
        <position position="152"/>
    </location>
    <ligand>
        <name>Zn(2+)</name>
        <dbReference type="ChEBI" id="CHEBI:29105"/>
        <label>2</label>
    </ligand>
</feature>
<dbReference type="EMBL" id="AC006434">
    <property type="protein sequence ID" value="AAF87119.1"/>
    <property type="molecule type" value="Genomic_DNA"/>
</dbReference>
<dbReference type="EMBL" id="CP002684">
    <property type="protein sequence ID" value="AEE35729.1"/>
    <property type="molecule type" value="Genomic_DNA"/>
</dbReference>
<dbReference type="EMBL" id="AY800620">
    <property type="protein sequence ID" value="AAV68856.1"/>
    <property type="molecule type" value="mRNA"/>
</dbReference>
<dbReference type="EMBL" id="AY924730">
    <property type="protein sequence ID" value="AAX23805.1"/>
    <property type="molecule type" value="mRNA"/>
</dbReference>
<dbReference type="PIR" id="F96785">
    <property type="entry name" value="F96785"/>
</dbReference>
<dbReference type="RefSeq" id="NP_177684.1">
    <property type="nucleotide sequence ID" value="NM_106205.3"/>
</dbReference>
<dbReference type="BioGRID" id="29107">
    <property type="interactions" value="24"/>
</dbReference>
<dbReference type="IntAct" id="Q9LQZ5">
    <property type="interactions" value="27"/>
</dbReference>
<dbReference type="STRING" id="3702.Q9LQZ5"/>
<dbReference type="PaxDb" id="3702-AT1G75520.1"/>
<dbReference type="ProteomicsDB" id="226567"/>
<dbReference type="EnsemblPlants" id="AT1G75520.1">
    <property type="protein sequence ID" value="AT1G75520.1"/>
    <property type="gene ID" value="AT1G75520"/>
</dbReference>
<dbReference type="GeneID" id="843888"/>
<dbReference type="Gramene" id="AT1G75520.1">
    <property type="protein sequence ID" value="AT1G75520.1"/>
    <property type="gene ID" value="AT1G75520"/>
</dbReference>
<dbReference type="KEGG" id="ath:AT1G75520"/>
<dbReference type="Araport" id="AT1G75520"/>
<dbReference type="TAIR" id="AT1G75520">
    <property type="gene designation" value="SRS5"/>
</dbReference>
<dbReference type="eggNOG" id="ENOG502QQ15">
    <property type="taxonomic scope" value="Eukaryota"/>
</dbReference>
<dbReference type="HOGENOM" id="CLU_041493_1_0_1"/>
<dbReference type="InParanoid" id="Q9LQZ5"/>
<dbReference type="OMA" id="YFQQQEH"/>
<dbReference type="OrthoDB" id="692274at2759"/>
<dbReference type="PhylomeDB" id="Q9LQZ5"/>
<dbReference type="PRO" id="PR:Q9LQZ5"/>
<dbReference type="Proteomes" id="UP000006548">
    <property type="component" value="Chromosome 1"/>
</dbReference>
<dbReference type="ExpressionAtlas" id="Q9LQZ5">
    <property type="expression patterns" value="baseline and differential"/>
</dbReference>
<dbReference type="GO" id="GO:0005634">
    <property type="term" value="C:nucleus"/>
    <property type="evidence" value="ECO:0000314"/>
    <property type="project" value="TAIR"/>
</dbReference>
<dbReference type="GO" id="GO:0003700">
    <property type="term" value="F:DNA-binding transcription factor activity"/>
    <property type="evidence" value="ECO:0000314"/>
    <property type="project" value="TAIR"/>
</dbReference>
<dbReference type="GO" id="GO:0046872">
    <property type="term" value="F:metal ion binding"/>
    <property type="evidence" value="ECO:0007669"/>
    <property type="project" value="UniProtKB-KW"/>
</dbReference>
<dbReference type="GO" id="GO:0043565">
    <property type="term" value="F:sequence-specific DNA binding"/>
    <property type="evidence" value="ECO:0000314"/>
    <property type="project" value="TAIR"/>
</dbReference>
<dbReference type="GO" id="GO:0048653">
    <property type="term" value="P:anther development"/>
    <property type="evidence" value="ECO:0000316"/>
    <property type="project" value="TAIR"/>
</dbReference>
<dbReference type="GO" id="GO:0009851">
    <property type="term" value="P:auxin biosynthetic process"/>
    <property type="evidence" value="ECO:0007669"/>
    <property type="project" value="UniProtKB-KW"/>
</dbReference>
<dbReference type="GO" id="GO:0009734">
    <property type="term" value="P:auxin-activated signaling pathway"/>
    <property type="evidence" value="ECO:0007669"/>
    <property type="project" value="UniProtKB-KW"/>
</dbReference>
<dbReference type="GO" id="GO:0009640">
    <property type="term" value="P:photomorphogenesis"/>
    <property type="evidence" value="ECO:0000316"/>
    <property type="project" value="TAIR"/>
</dbReference>
<dbReference type="GO" id="GO:0009555">
    <property type="term" value="P:pollen development"/>
    <property type="evidence" value="ECO:0000316"/>
    <property type="project" value="TAIR"/>
</dbReference>
<dbReference type="InterPro" id="IPR007818">
    <property type="entry name" value="SHI"/>
</dbReference>
<dbReference type="InterPro" id="IPR006511">
    <property type="entry name" value="SHI_C"/>
</dbReference>
<dbReference type="InterPro" id="IPR006510">
    <property type="entry name" value="Znf_LRP1"/>
</dbReference>
<dbReference type="NCBIfam" id="TIGR01624">
    <property type="entry name" value="LRP1_Cterm"/>
    <property type="match status" value="1"/>
</dbReference>
<dbReference type="NCBIfam" id="TIGR01623">
    <property type="entry name" value="put_zinc_LRP1"/>
    <property type="match status" value="1"/>
</dbReference>
<dbReference type="PANTHER" id="PTHR31604">
    <property type="entry name" value="PROTEIN LATERAL ROOT PRIMORDIUM 1"/>
    <property type="match status" value="1"/>
</dbReference>
<dbReference type="PANTHER" id="PTHR31604:SF40">
    <property type="entry name" value="PROTEIN SHI RELATED SEQUENCE 5"/>
    <property type="match status" value="1"/>
</dbReference>
<dbReference type="Pfam" id="PF05142">
    <property type="entry name" value="DUF702"/>
    <property type="match status" value="1"/>
</dbReference>
<protein>
    <recommendedName>
        <fullName>Protein SHI RELATED SEQUENCE 5</fullName>
    </recommendedName>
</protein>
<proteinExistence type="evidence at protein level"/>
<accession>Q9LQZ5</accession>
<gene>
    <name type="primary">SRS5</name>
    <name type="ordered locus">At1g75520</name>
    <name type="ORF">F1B16.17</name>
</gene>
<organism>
    <name type="scientific">Arabidopsis thaliana</name>
    <name type="common">Mouse-ear cress</name>
    <dbReference type="NCBI Taxonomy" id="3702"/>
    <lineage>
        <taxon>Eukaryota</taxon>
        <taxon>Viridiplantae</taxon>
        <taxon>Streptophyta</taxon>
        <taxon>Embryophyta</taxon>
        <taxon>Tracheophyta</taxon>
        <taxon>Spermatophyta</taxon>
        <taxon>Magnoliopsida</taxon>
        <taxon>eudicotyledons</taxon>
        <taxon>Gunneridae</taxon>
        <taxon>Pentapetalae</taxon>
        <taxon>rosids</taxon>
        <taxon>malvids</taxon>
        <taxon>Brassicales</taxon>
        <taxon>Brassicaceae</taxon>
        <taxon>Camelineae</taxon>
        <taxon>Arabidopsis</taxon>
    </lineage>
</organism>
<comment type="function">
    <text evidence="3">Transcription activator that binds DNA on 5'-ACTCTAC-3' and promotes auxin homeostasis-regulating gene expression (e.g. YUC genes), as well as genes affecting stamen development, cell expansion and timing of flowering. Synergistically with other SHI-related proteins, regulates gynoecium, stamen and leaf development in a dose-dependent manner, controlling apical-basal patterning. Promotes style and stigma formation, and influences vascular development during gynoecium development. May also have a role in the formation and/or maintenance of the shoot apical meristem (SAM).</text>
</comment>
<comment type="interaction">
    <interactant intactId="EBI-15194925">
        <id>Q9LQZ5</id>
    </interactant>
    <interactant intactId="EBI-4424877">
        <id>Q9S7W5</id>
        <label>TCP13</label>
    </interactant>
    <organismsDiffer>false</organismsDiffer>
    <experiments>3</experiments>
</comment>
<comment type="subcellular location">
    <subcellularLocation>
        <location evidence="1">Nucleus</location>
    </subcellularLocation>
</comment>
<comment type="disruption phenotype">
    <text evidence="3">No visible phenotype.</text>
</comment>
<comment type="similarity">
    <text evidence="4">Belongs to the SHI protein family.</text>
</comment>
<name>SRS5_ARATH</name>
<sequence length="346" mass="38554">MAGFFYLGGRDNNSNNNKQDHHQVDKDHHHQDKSNYLYLYKDEIYNNNKGFEIWPPQYFQQQEHQQQQQQQQHASAPANFYSFGMVPSGSSSNNNNNRSRSLYFNVVSDHEPGGFTVTRQGGMNCQDCGNQAKKDCPHMRCRTCCKSRGFHCQTHVKSTWVPAAKRRERLAQLASLQHHSASSRETQNAKRLREASGGDNNDDKDHSGGGGSALANTRVVNANSNSGLEVSQHLPPEVNSPAIFRCVRVSSIEEDEDDQAYAYQTAVNIGGHIFKGILYDQGPEHQDNHHLNLLASTATTTNVEETATKTVTGNNNNGLMLDPSSLYPAQLNSFIAGTPFFTPPRS</sequence>
<keyword id="KW-0010">Activator</keyword>
<keyword id="KW-0073">Auxin biosynthesis</keyword>
<keyword id="KW-0927">Auxin signaling pathway</keyword>
<keyword id="KW-0217">Developmental protein</keyword>
<keyword id="KW-0238">DNA-binding</keyword>
<keyword id="KW-0479">Metal-binding</keyword>
<keyword id="KW-0539">Nucleus</keyword>
<keyword id="KW-1185">Reference proteome</keyword>
<keyword id="KW-0862">Zinc</keyword>
<evidence type="ECO:0000250" key="1"/>
<evidence type="ECO:0000256" key="2">
    <source>
        <dbReference type="SAM" id="MobiDB-lite"/>
    </source>
</evidence>
<evidence type="ECO:0000269" key="3">
    <source>
    </source>
</evidence>
<evidence type="ECO:0000305" key="4"/>
<reference key="1">
    <citation type="journal article" date="2000" name="Nature">
        <title>Sequence and analysis of chromosome 1 of the plant Arabidopsis thaliana.</title>
        <authorList>
            <person name="Theologis A."/>
            <person name="Ecker J.R."/>
            <person name="Palm C.J."/>
            <person name="Federspiel N.A."/>
            <person name="Kaul S."/>
            <person name="White O."/>
            <person name="Alonso J."/>
            <person name="Altafi H."/>
            <person name="Araujo R."/>
            <person name="Bowman C.L."/>
            <person name="Brooks S.Y."/>
            <person name="Buehler E."/>
            <person name="Chan A."/>
            <person name="Chao Q."/>
            <person name="Chen H."/>
            <person name="Cheuk R.F."/>
            <person name="Chin C.W."/>
            <person name="Chung M.K."/>
            <person name="Conn L."/>
            <person name="Conway A.B."/>
            <person name="Conway A.R."/>
            <person name="Creasy T.H."/>
            <person name="Dewar K."/>
            <person name="Dunn P."/>
            <person name="Etgu P."/>
            <person name="Feldblyum T.V."/>
            <person name="Feng J.-D."/>
            <person name="Fong B."/>
            <person name="Fujii C.Y."/>
            <person name="Gill J.E."/>
            <person name="Goldsmith A.D."/>
            <person name="Haas B."/>
            <person name="Hansen N.F."/>
            <person name="Hughes B."/>
            <person name="Huizar L."/>
            <person name="Hunter J.L."/>
            <person name="Jenkins J."/>
            <person name="Johnson-Hopson C."/>
            <person name="Khan S."/>
            <person name="Khaykin E."/>
            <person name="Kim C.J."/>
            <person name="Koo H.L."/>
            <person name="Kremenetskaia I."/>
            <person name="Kurtz D.B."/>
            <person name="Kwan A."/>
            <person name="Lam B."/>
            <person name="Langin-Hooper S."/>
            <person name="Lee A."/>
            <person name="Lee J.M."/>
            <person name="Lenz C.A."/>
            <person name="Li J.H."/>
            <person name="Li Y.-P."/>
            <person name="Lin X."/>
            <person name="Liu S.X."/>
            <person name="Liu Z.A."/>
            <person name="Luros J.S."/>
            <person name="Maiti R."/>
            <person name="Marziali A."/>
            <person name="Militscher J."/>
            <person name="Miranda M."/>
            <person name="Nguyen M."/>
            <person name="Nierman W.C."/>
            <person name="Osborne B.I."/>
            <person name="Pai G."/>
            <person name="Peterson J."/>
            <person name="Pham P.K."/>
            <person name="Rizzo M."/>
            <person name="Rooney T."/>
            <person name="Rowley D."/>
            <person name="Sakano H."/>
            <person name="Salzberg S.L."/>
            <person name="Schwartz J.R."/>
            <person name="Shinn P."/>
            <person name="Southwick A.M."/>
            <person name="Sun H."/>
            <person name="Tallon L.J."/>
            <person name="Tambunga G."/>
            <person name="Toriumi M.J."/>
            <person name="Town C.D."/>
            <person name="Utterback T."/>
            <person name="Van Aken S."/>
            <person name="Vaysberg M."/>
            <person name="Vysotskaia V.S."/>
            <person name="Walker M."/>
            <person name="Wu D."/>
            <person name="Yu G."/>
            <person name="Fraser C.M."/>
            <person name="Venter J.C."/>
            <person name="Davis R.W."/>
        </authorList>
    </citation>
    <scope>NUCLEOTIDE SEQUENCE [LARGE SCALE GENOMIC DNA]</scope>
    <source>
        <strain>cv. Columbia</strain>
    </source>
</reference>
<reference key="2">
    <citation type="journal article" date="2017" name="Plant J.">
        <title>Araport11: a complete reannotation of the Arabidopsis thaliana reference genome.</title>
        <authorList>
            <person name="Cheng C.Y."/>
            <person name="Krishnakumar V."/>
            <person name="Chan A.P."/>
            <person name="Thibaud-Nissen F."/>
            <person name="Schobel S."/>
            <person name="Town C.D."/>
        </authorList>
    </citation>
    <scope>GENOME REANNOTATION</scope>
    <source>
        <strain>cv. Columbia</strain>
    </source>
</reference>
<reference key="3">
    <citation type="journal article" date="2005" name="Plant Physiol.">
        <title>Analysis of the cDNAs of hypothetical genes on Arabidopsis chromosome 2 reveals numerous transcript variants.</title>
        <authorList>
            <person name="Xiao Y.-L."/>
            <person name="Smith S.R."/>
            <person name="Ishmael N."/>
            <person name="Redman J.C."/>
            <person name="Kumar N."/>
            <person name="Monaghan E.L."/>
            <person name="Ayele M."/>
            <person name="Haas B.J."/>
            <person name="Wu H.C."/>
            <person name="Town C.D."/>
        </authorList>
    </citation>
    <scope>NUCLEOTIDE SEQUENCE [LARGE SCALE MRNA]</scope>
    <source>
        <strain>cv. Columbia</strain>
    </source>
</reference>
<reference key="4">
    <citation type="submission" date="2005-02" db="EMBL/GenBank/DDBJ databases">
        <authorList>
            <person name="Underwood B.A."/>
            <person name="Xiao Y.-L."/>
            <person name="Moskal W.A. Jr."/>
            <person name="Monaghan E.L."/>
            <person name="Wang W."/>
            <person name="Redman J.C."/>
            <person name="Wu H.C."/>
            <person name="Utterback T."/>
            <person name="Town C.D."/>
        </authorList>
    </citation>
    <scope>NUCLEOTIDE SEQUENCE [LARGE SCALE MRNA]</scope>
    <source>
        <strain>cv. Columbia</strain>
    </source>
</reference>
<reference key="5">
    <citation type="journal article" date="2006" name="Plant J.">
        <title>Functionally redundant SHI family genes regulate Arabidopsis gynoecium development in a dose-dependent manner.</title>
        <authorList>
            <person name="Kuusk S."/>
            <person name="Sohlberg J.J."/>
            <person name="Magnus Eklund D."/>
            <person name="Sundberg E."/>
        </authorList>
    </citation>
    <scope>FUNCTION</scope>
    <scope>DISRUPTION PHENOTYPE</scope>
    <scope>GENE FAMILY</scope>
    <scope>NOMENCLATURE</scope>
</reference>
<reference key="6">
    <citation type="journal article" date="2011" name="Plant Physiol.">
        <title>Expression of Arabidopsis SHORT INTERNODES/STYLISH family genes in auxin biosynthesis zones of aerial organs is dependent on a GCC box-like regulatory element.</title>
        <authorList>
            <person name="Eklund D.M."/>
            <person name="Cierlik I."/>
            <person name="Staaldal V."/>
            <person name="Claes A.R."/>
            <person name="Vestman D."/>
            <person name="Chandler J."/>
            <person name="Sundberg E."/>
        </authorList>
    </citation>
    <scope>GENE FAMILY</scope>
</reference>